<proteinExistence type="inferred from homology"/>
<feature type="chain" id="PRO_1000149348" description="3-isopropylmalate dehydratase large subunit">
    <location>
        <begin position="1"/>
        <end position="480"/>
    </location>
</feature>
<feature type="binding site" evidence="1">
    <location>
        <position position="360"/>
    </location>
    <ligand>
        <name>[4Fe-4S] cluster</name>
        <dbReference type="ChEBI" id="CHEBI:49883"/>
    </ligand>
</feature>
<feature type="binding site" evidence="1">
    <location>
        <position position="418"/>
    </location>
    <ligand>
        <name>[4Fe-4S] cluster</name>
        <dbReference type="ChEBI" id="CHEBI:49883"/>
    </ligand>
</feature>
<feature type="binding site" evidence="1">
    <location>
        <position position="421"/>
    </location>
    <ligand>
        <name>[4Fe-4S] cluster</name>
        <dbReference type="ChEBI" id="CHEBI:49883"/>
    </ligand>
</feature>
<reference key="1">
    <citation type="submission" date="2009-01" db="EMBL/GenBank/DDBJ databases">
        <title>Complete sequence of Anaeromyxobacter dehalogenans 2CP-1.</title>
        <authorList>
            <person name="Lucas S."/>
            <person name="Copeland A."/>
            <person name="Lapidus A."/>
            <person name="Glavina del Rio T."/>
            <person name="Dalin E."/>
            <person name="Tice H."/>
            <person name="Bruce D."/>
            <person name="Goodwin L."/>
            <person name="Pitluck S."/>
            <person name="Saunders E."/>
            <person name="Brettin T."/>
            <person name="Detter J.C."/>
            <person name="Han C."/>
            <person name="Larimer F."/>
            <person name="Land M."/>
            <person name="Hauser L."/>
            <person name="Kyrpides N."/>
            <person name="Ovchinnikova G."/>
            <person name="Beliaev A.S."/>
            <person name="Richardson P."/>
        </authorList>
    </citation>
    <scope>NUCLEOTIDE SEQUENCE [LARGE SCALE GENOMIC DNA]</scope>
    <source>
        <strain>2CP-1 / ATCC BAA-258</strain>
    </source>
</reference>
<accession>B8J825</accession>
<dbReference type="EC" id="4.2.1.33" evidence="1"/>
<dbReference type="EMBL" id="CP001359">
    <property type="protein sequence ID" value="ACL65324.1"/>
    <property type="molecule type" value="Genomic_DNA"/>
</dbReference>
<dbReference type="RefSeq" id="WP_012633224.1">
    <property type="nucleotide sequence ID" value="NC_011891.1"/>
</dbReference>
<dbReference type="SMR" id="B8J825"/>
<dbReference type="KEGG" id="acp:A2cp1_1983"/>
<dbReference type="HOGENOM" id="CLU_006714_3_4_7"/>
<dbReference type="UniPathway" id="UPA00048">
    <property type="reaction ID" value="UER00071"/>
</dbReference>
<dbReference type="Proteomes" id="UP000007089">
    <property type="component" value="Chromosome"/>
</dbReference>
<dbReference type="GO" id="GO:0003861">
    <property type="term" value="F:3-isopropylmalate dehydratase activity"/>
    <property type="evidence" value="ECO:0007669"/>
    <property type="project" value="UniProtKB-UniRule"/>
</dbReference>
<dbReference type="GO" id="GO:0051539">
    <property type="term" value="F:4 iron, 4 sulfur cluster binding"/>
    <property type="evidence" value="ECO:0007669"/>
    <property type="project" value="UniProtKB-KW"/>
</dbReference>
<dbReference type="GO" id="GO:0046872">
    <property type="term" value="F:metal ion binding"/>
    <property type="evidence" value="ECO:0007669"/>
    <property type="project" value="UniProtKB-KW"/>
</dbReference>
<dbReference type="GO" id="GO:0009098">
    <property type="term" value="P:L-leucine biosynthetic process"/>
    <property type="evidence" value="ECO:0007669"/>
    <property type="project" value="UniProtKB-UniRule"/>
</dbReference>
<dbReference type="CDD" id="cd01583">
    <property type="entry name" value="IPMI"/>
    <property type="match status" value="1"/>
</dbReference>
<dbReference type="Gene3D" id="3.30.499.10">
    <property type="entry name" value="Aconitase, domain 3"/>
    <property type="match status" value="2"/>
</dbReference>
<dbReference type="HAMAP" id="MF_01026">
    <property type="entry name" value="LeuC_type1"/>
    <property type="match status" value="1"/>
</dbReference>
<dbReference type="InterPro" id="IPR004430">
    <property type="entry name" value="3-IsopropMal_deHydase_lsu"/>
</dbReference>
<dbReference type="InterPro" id="IPR015931">
    <property type="entry name" value="Acnase/IPM_dHydase_lsu_aba_1/3"/>
</dbReference>
<dbReference type="InterPro" id="IPR001030">
    <property type="entry name" value="Acoase/IPM_deHydtase_lsu_aba"/>
</dbReference>
<dbReference type="InterPro" id="IPR018136">
    <property type="entry name" value="Aconitase_4Fe-4S_BS"/>
</dbReference>
<dbReference type="InterPro" id="IPR036008">
    <property type="entry name" value="Aconitase_4Fe-4S_dom"/>
</dbReference>
<dbReference type="InterPro" id="IPR050067">
    <property type="entry name" value="IPM_dehydratase_rel_enz"/>
</dbReference>
<dbReference type="InterPro" id="IPR033941">
    <property type="entry name" value="IPMI_cat"/>
</dbReference>
<dbReference type="NCBIfam" id="TIGR00170">
    <property type="entry name" value="leuC"/>
    <property type="match status" value="1"/>
</dbReference>
<dbReference type="NCBIfam" id="NF004016">
    <property type="entry name" value="PRK05478.1"/>
    <property type="match status" value="1"/>
</dbReference>
<dbReference type="NCBIfam" id="NF009116">
    <property type="entry name" value="PRK12466.1"/>
    <property type="match status" value="1"/>
</dbReference>
<dbReference type="PANTHER" id="PTHR43822:SF9">
    <property type="entry name" value="3-ISOPROPYLMALATE DEHYDRATASE"/>
    <property type="match status" value="1"/>
</dbReference>
<dbReference type="PANTHER" id="PTHR43822">
    <property type="entry name" value="HOMOACONITASE, MITOCHONDRIAL-RELATED"/>
    <property type="match status" value="1"/>
</dbReference>
<dbReference type="Pfam" id="PF00330">
    <property type="entry name" value="Aconitase"/>
    <property type="match status" value="1"/>
</dbReference>
<dbReference type="PRINTS" id="PR00415">
    <property type="entry name" value="ACONITASE"/>
</dbReference>
<dbReference type="SUPFAM" id="SSF53732">
    <property type="entry name" value="Aconitase iron-sulfur domain"/>
    <property type="match status" value="1"/>
</dbReference>
<dbReference type="PROSITE" id="PS00450">
    <property type="entry name" value="ACONITASE_1"/>
    <property type="match status" value="1"/>
</dbReference>
<dbReference type="PROSITE" id="PS01244">
    <property type="entry name" value="ACONITASE_2"/>
    <property type="match status" value="1"/>
</dbReference>
<evidence type="ECO:0000255" key="1">
    <source>
        <dbReference type="HAMAP-Rule" id="MF_01026"/>
    </source>
</evidence>
<comment type="function">
    <text evidence="1">Catalyzes the isomerization between 2-isopropylmalate and 3-isopropylmalate, via the formation of 2-isopropylmaleate.</text>
</comment>
<comment type="catalytic activity">
    <reaction evidence="1">
        <text>(2R,3S)-3-isopropylmalate = (2S)-2-isopropylmalate</text>
        <dbReference type="Rhea" id="RHEA:32287"/>
        <dbReference type="ChEBI" id="CHEBI:1178"/>
        <dbReference type="ChEBI" id="CHEBI:35121"/>
        <dbReference type="EC" id="4.2.1.33"/>
    </reaction>
</comment>
<comment type="cofactor">
    <cofactor evidence="1">
        <name>[4Fe-4S] cluster</name>
        <dbReference type="ChEBI" id="CHEBI:49883"/>
    </cofactor>
    <text evidence="1">Binds 1 [4Fe-4S] cluster per subunit.</text>
</comment>
<comment type="pathway">
    <text evidence="1">Amino-acid biosynthesis; L-leucine biosynthesis; L-leucine from 3-methyl-2-oxobutanoate: step 2/4.</text>
</comment>
<comment type="subunit">
    <text evidence="1">Heterodimer of LeuC and LeuD.</text>
</comment>
<comment type="similarity">
    <text evidence="1">Belongs to the aconitase/IPM isomerase family. LeuC type 1 subfamily.</text>
</comment>
<protein>
    <recommendedName>
        <fullName evidence="1">3-isopropylmalate dehydratase large subunit</fullName>
        <ecNumber evidence="1">4.2.1.33</ecNumber>
    </recommendedName>
    <alternativeName>
        <fullName evidence="1">Alpha-IPM isomerase</fullName>
        <shortName evidence="1">IPMI</shortName>
    </alternativeName>
    <alternativeName>
        <fullName evidence="1">Isopropylmalate isomerase</fullName>
    </alternativeName>
</protein>
<gene>
    <name evidence="1" type="primary">leuC</name>
    <name type="ordered locus">A2cp1_1983</name>
</gene>
<sequence>MSKRSDGSQPRTIVDKVWDAHVVRAETPDAPAILYIDLHLVHEVTSPQAFTVLRERGLKLRRPERTLATMDHSIPTLPRGADGRWPFVDAQAAAQVSQMERNCADFGVELHGLGDDAQGVVHVFGPEMGATQPGMTVVCGDSHTATHGAFGALAFGIGTSEVGHVLASQCLLQRRPRTLAVRVDGELGPGLSAKDLILAIIAKLGVGGGTGHVIEYLGPAVRALSMEGRMTLCNMSIEAGARAGLVAPDDTTFEWLAGRPRAPKGAAWDEAVARWRALPSDDGATYDRELRLDAAALEPMITFGTNPGQGIAVTGLVPDPVAERDASARATLEAALRYMGLVPGKPIAGQKVDVVFIGSCTNGRIEDMREAARVLKGRKVRTRTLVVPGSHRVKKDAEAEGIDRIVREAGAEWREPGCSMCIAMNGDNLQAGQYCVSTSNRNFEGRQGPGGRTLLASPLTAAAAAVTGAVADPRRVLEGR</sequence>
<keyword id="KW-0004">4Fe-4S</keyword>
<keyword id="KW-0028">Amino-acid biosynthesis</keyword>
<keyword id="KW-0100">Branched-chain amino acid biosynthesis</keyword>
<keyword id="KW-0408">Iron</keyword>
<keyword id="KW-0411">Iron-sulfur</keyword>
<keyword id="KW-0432">Leucine biosynthesis</keyword>
<keyword id="KW-0456">Lyase</keyword>
<keyword id="KW-0479">Metal-binding</keyword>
<organism>
    <name type="scientific">Anaeromyxobacter dehalogenans (strain 2CP-1 / ATCC BAA-258)</name>
    <dbReference type="NCBI Taxonomy" id="455488"/>
    <lineage>
        <taxon>Bacteria</taxon>
        <taxon>Pseudomonadati</taxon>
        <taxon>Myxococcota</taxon>
        <taxon>Myxococcia</taxon>
        <taxon>Myxococcales</taxon>
        <taxon>Cystobacterineae</taxon>
        <taxon>Anaeromyxobacteraceae</taxon>
        <taxon>Anaeromyxobacter</taxon>
    </lineage>
</organism>
<name>LEUC_ANAD2</name>